<accession>P82622</accession>
<protein>
    <recommendedName>
        <fullName>Putative defensin-like protein 228</fullName>
    </recommendedName>
    <alternativeName>
        <fullName>Putative S locus cysteine-rich-like protein 3</fullName>
        <shortName>Protein SCRL3</shortName>
        <shortName>SCR-like protein 3</shortName>
    </alternativeName>
</protein>
<gene>
    <name type="primary">SCRL3</name>
    <name type="ordered locus">At1g08695</name>
    <name type="ORF">F22O13</name>
</gene>
<evidence type="ECO:0000250" key="1"/>
<evidence type="ECO:0000255" key="2"/>
<evidence type="ECO:0000305" key="3"/>
<comment type="subcellular location">
    <subcellularLocation>
        <location evidence="1">Secreted</location>
    </subcellularLocation>
</comment>
<comment type="similarity">
    <text evidence="3">Belongs to the DEFL family.</text>
</comment>
<sequence length="88" mass="9892">MMKSAILLMVSCVFMFLVVSYIQDVEGANKRCHLNQMFTGKCGNDGNKACLGDFKNKRFRYDLCQCTDATQISPSLPPQRVCNCSRPC</sequence>
<name>DF228_ARATH</name>
<reference evidence="3" key="1">
    <citation type="journal article" date="2000" name="Nature">
        <title>Sequence and analysis of chromosome 1 of the plant Arabidopsis thaliana.</title>
        <authorList>
            <person name="Theologis A."/>
            <person name="Ecker J.R."/>
            <person name="Palm C.J."/>
            <person name="Federspiel N.A."/>
            <person name="Kaul S."/>
            <person name="White O."/>
            <person name="Alonso J."/>
            <person name="Altafi H."/>
            <person name="Araujo R."/>
            <person name="Bowman C.L."/>
            <person name="Brooks S.Y."/>
            <person name="Buehler E."/>
            <person name="Chan A."/>
            <person name="Chao Q."/>
            <person name="Chen H."/>
            <person name="Cheuk R.F."/>
            <person name="Chin C.W."/>
            <person name="Chung M.K."/>
            <person name="Conn L."/>
            <person name="Conway A.B."/>
            <person name="Conway A.R."/>
            <person name="Creasy T.H."/>
            <person name="Dewar K."/>
            <person name="Dunn P."/>
            <person name="Etgu P."/>
            <person name="Feldblyum T.V."/>
            <person name="Feng J.-D."/>
            <person name="Fong B."/>
            <person name="Fujii C.Y."/>
            <person name="Gill J.E."/>
            <person name="Goldsmith A.D."/>
            <person name="Haas B."/>
            <person name="Hansen N.F."/>
            <person name="Hughes B."/>
            <person name="Huizar L."/>
            <person name="Hunter J.L."/>
            <person name="Jenkins J."/>
            <person name="Johnson-Hopson C."/>
            <person name="Khan S."/>
            <person name="Khaykin E."/>
            <person name="Kim C.J."/>
            <person name="Koo H.L."/>
            <person name="Kremenetskaia I."/>
            <person name="Kurtz D.B."/>
            <person name="Kwan A."/>
            <person name="Lam B."/>
            <person name="Langin-Hooper S."/>
            <person name="Lee A."/>
            <person name="Lee J.M."/>
            <person name="Lenz C.A."/>
            <person name="Li J.H."/>
            <person name="Li Y.-P."/>
            <person name="Lin X."/>
            <person name="Liu S.X."/>
            <person name="Liu Z.A."/>
            <person name="Luros J.S."/>
            <person name="Maiti R."/>
            <person name="Marziali A."/>
            <person name="Militscher J."/>
            <person name="Miranda M."/>
            <person name="Nguyen M."/>
            <person name="Nierman W.C."/>
            <person name="Osborne B.I."/>
            <person name="Pai G."/>
            <person name="Peterson J."/>
            <person name="Pham P.K."/>
            <person name="Rizzo M."/>
            <person name="Rooney T."/>
            <person name="Rowley D."/>
            <person name="Sakano H."/>
            <person name="Salzberg S.L."/>
            <person name="Schwartz J.R."/>
            <person name="Shinn P."/>
            <person name="Southwick A.M."/>
            <person name="Sun H."/>
            <person name="Tallon L.J."/>
            <person name="Tambunga G."/>
            <person name="Toriumi M.J."/>
            <person name="Town C.D."/>
            <person name="Utterback T."/>
            <person name="Van Aken S."/>
            <person name="Vaysberg M."/>
            <person name="Vysotskaia V.S."/>
            <person name="Walker M."/>
            <person name="Wu D."/>
            <person name="Yu G."/>
            <person name="Fraser C.M."/>
            <person name="Venter J.C."/>
            <person name="Davis R.W."/>
        </authorList>
    </citation>
    <scope>NUCLEOTIDE SEQUENCE [LARGE SCALE GENOMIC DNA]</scope>
    <source>
        <strain>cv. Columbia</strain>
    </source>
</reference>
<reference key="2">
    <citation type="journal article" date="2017" name="Plant J.">
        <title>Araport11: a complete reannotation of the Arabidopsis thaliana reference genome.</title>
        <authorList>
            <person name="Cheng C.Y."/>
            <person name="Krishnakumar V."/>
            <person name="Chan A.P."/>
            <person name="Thibaud-Nissen F."/>
            <person name="Schobel S."/>
            <person name="Town C.D."/>
        </authorList>
    </citation>
    <scope>GENOME REANNOTATION</scope>
    <source>
        <strain>cv. Columbia</strain>
    </source>
</reference>
<reference evidence="3" key="3">
    <citation type="journal article" date="2001" name="Plant Mol. Biol.">
        <title>Two large Arabidopsis thaliana gene families are homologous to the Brassica gene superfamily that encodes pollen coat proteins and the male component of the self-incompatibility response.</title>
        <authorList>
            <person name="Vanoosthuyse V."/>
            <person name="Miege C."/>
            <person name="Dumas C."/>
            <person name="Cock J.M."/>
        </authorList>
    </citation>
    <scope>IDENTIFICATION</scope>
</reference>
<reference key="4">
    <citation type="journal article" date="2005" name="Plant Physiol.">
        <title>Genome organization of more than 300 defensin-like genes in Arabidopsis.</title>
        <authorList>
            <person name="Silverstein K.A.T."/>
            <person name="Graham M.A."/>
            <person name="Paape T.D."/>
            <person name="VandenBosch K.A."/>
        </authorList>
    </citation>
    <scope>GENE FAMILY</scope>
</reference>
<organism evidence="3">
    <name type="scientific">Arabidopsis thaliana</name>
    <name type="common">Mouse-ear cress</name>
    <dbReference type="NCBI Taxonomy" id="3702"/>
    <lineage>
        <taxon>Eukaryota</taxon>
        <taxon>Viridiplantae</taxon>
        <taxon>Streptophyta</taxon>
        <taxon>Embryophyta</taxon>
        <taxon>Tracheophyta</taxon>
        <taxon>Spermatophyta</taxon>
        <taxon>Magnoliopsida</taxon>
        <taxon>eudicotyledons</taxon>
        <taxon>Gunneridae</taxon>
        <taxon>Pentapetalae</taxon>
        <taxon>rosids</taxon>
        <taxon>malvids</taxon>
        <taxon>Brassicales</taxon>
        <taxon>Brassicaceae</taxon>
        <taxon>Camelineae</taxon>
        <taxon>Arabidopsis</taxon>
    </lineage>
</organism>
<feature type="signal peptide" evidence="2">
    <location>
        <begin position="1"/>
        <end position="27"/>
    </location>
</feature>
<feature type="chain" id="PRO_0000031929" description="Putative defensin-like protein 228">
    <location>
        <begin position="28"/>
        <end position="88"/>
    </location>
</feature>
<feature type="disulfide bond" evidence="1">
    <location>
        <begin position="32"/>
        <end position="88"/>
    </location>
</feature>
<feature type="disulfide bond" evidence="1">
    <location>
        <begin position="42"/>
        <end position="66"/>
    </location>
</feature>
<feature type="disulfide bond" evidence="1">
    <location>
        <begin position="50"/>
        <end position="82"/>
    </location>
</feature>
<feature type="disulfide bond" evidence="1">
    <location>
        <begin position="64"/>
        <end position="84"/>
    </location>
</feature>
<keyword id="KW-0929">Antimicrobial</keyword>
<keyword id="KW-1015">Disulfide bond</keyword>
<keyword id="KW-0295">Fungicide</keyword>
<keyword id="KW-0611">Plant defense</keyword>
<keyword id="KW-1185">Reference proteome</keyword>
<keyword id="KW-0964">Secreted</keyword>
<keyword id="KW-0732">Signal</keyword>
<dbReference type="EMBL" id="AC003981">
    <property type="status" value="NOT_ANNOTATED_CDS"/>
    <property type="molecule type" value="Genomic_DNA"/>
</dbReference>
<dbReference type="EMBL" id="CP002684">
    <property type="protein sequence ID" value="AEE28335.1"/>
    <property type="molecule type" value="Genomic_DNA"/>
</dbReference>
<dbReference type="RefSeq" id="NP_001031003.1">
    <property type="nucleotide sequence ID" value="NM_001035926.2"/>
</dbReference>
<dbReference type="SMR" id="P82622"/>
<dbReference type="STRING" id="3702.P82622"/>
<dbReference type="PaxDb" id="3702-AT1G08695.1"/>
<dbReference type="ProteomicsDB" id="224149"/>
<dbReference type="EnsemblPlants" id="AT1G08695.1">
    <property type="protein sequence ID" value="AT1G08695.1"/>
    <property type="gene ID" value="AT1G08695"/>
</dbReference>
<dbReference type="GeneID" id="3766683"/>
<dbReference type="Gramene" id="AT1G08695.1">
    <property type="protein sequence ID" value="AT1G08695.1"/>
    <property type="gene ID" value="AT1G08695"/>
</dbReference>
<dbReference type="KEGG" id="ath:AT1G08695"/>
<dbReference type="Araport" id="AT1G08695"/>
<dbReference type="TAIR" id="AT1G08695">
    <property type="gene designation" value="SCRL3"/>
</dbReference>
<dbReference type="HOGENOM" id="CLU_174283_0_0_1"/>
<dbReference type="InParanoid" id="P82622"/>
<dbReference type="OMA" id="NDGNKAC"/>
<dbReference type="OrthoDB" id="1024999at2759"/>
<dbReference type="PhylomeDB" id="P82622"/>
<dbReference type="PRO" id="PR:P82622"/>
<dbReference type="Proteomes" id="UP000006548">
    <property type="component" value="Chromosome 1"/>
</dbReference>
<dbReference type="ExpressionAtlas" id="P82622">
    <property type="expression patterns" value="baseline"/>
</dbReference>
<dbReference type="GO" id="GO:0005576">
    <property type="term" value="C:extracellular region"/>
    <property type="evidence" value="ECO:0007669"/>
    <property type="project" value="UniProtKB-SubCell"/>
</dbReference>
<dbReference type="GO" id="GO:0050832">
    <property type="term" value="P:defense response to fungus"/>
    <property type="evidence" value="ECO:0007669"/>
    <property type="project" value="UniProtKB-KW"/>
</dbReference>
<dbReference type="GO" id="GO:0031640">
    <property type="term" value="P:killing of cells of another organism"/>
    <property type="evidence" value="ECO:0007669"/>
    <property type="project" value="UniProtKB-KW"/>
</dbReference>
<dbReference type="GO" id="GO:0007165">
    <property type="term" value="P:signal transduction"/>
    <property type="evidence" value="ECO:0007669"/>
    <property type="project" value="InterPro"/>
</dbReference>
<dbReference type="InterPro" id="IPR010682">
    <property type="entry name" value="SCRL"/>
</dbReference>
<dbReference type="PANTHER" id="PTHR34450:SF7">
    <property type="entry name" value="DEFENSIN-LIKE PROTEIN 228-RELATED"/>
    <property type="match status" value="1"/>
</dbReference>
<dbReference type="PANTHER" id="PTHR34450">
    <property type="entry name" value="DEFENSIN-LIKE PROTEIN 245-RELATED"/>
    <property type="match status" value="1"/>
</dbReference>
<dbReference type="Pfam" id="PF06876">
    <property type="entry name" value="SCRL"/>
    <property type="match status" value="1"/>
</dbReference>
<proteinExistence type="inferred from homology"/>